<dbReference type="EC" id="3.1.21.10" evidence="1"/>
<dbReference type="EMBL" id="BA000030">
    <property type="protein sequence ID" value="BAC74544.1"/>
    <property type="molecule type" value="Genomic_DNA"/>
</dbReference>
<dbReference type="RefSeq" id="WP_010988231.1">
    <property type="nucleotide sequence ID" value="NZ_JZJK01000082.1"/>
</dbReference>
<dbReference type="SMR" id="Q820F5"/>
<dbReference type="GeneID" id="41543908"/>
<dbReference type="KEGG" id="sma:SAVERM_6833"/>
<dbReference type="eggNOG" id="COG0817">
    <property type="taxonomic scope" value="Bacteria"/>
</dbReference>
<dbReference type="HOGENOM" id="CLU_091257_0_2_11"/>
<dbReference type="OrthoDB" id="9805499at2"/>
<dbReference type="Proteomes" id="UP000000428">
    <property type="component" value="Chromosome"/>
</dbReference>
<dbReference type="GO" id="GO:0005737">
    <property type="term" value="C:cytoplasm"/>
    <property type="evidence" value="ECO:0007669"/>
    <property type="project" value="UniProtKB-SubCell"/>
</dbReference>
<dbReference type="GO" id="GO:0048476">
    <property type="term" value="C:Holliday junction resolvase complex"/>
    <property type="evidence" value="ECO:0007669"/>
    <property type="project" value="UniProtKB-UniRule"/>
</dbReference>
<dbReference type="GO" id="GO:0008821">
    <property type="term" value="F:crossover junction DNA endonuclease activity"/>
    <property type="evidence" value="ECO:0007669"/>
    <property type="project" value="UniProtKB-UniRule"/>
</dbReference>
<dbReference type="GO" id="GO:0003677">
    <property type="term" value="F:DNA binding"/>
    <property type="evidence" value="ECO:0007669"/>
    <property type="project" value="UniProtKB-KW"/>
</dbReference>
<dbReference type="GO" id="GO:0000287">
    <property type="term" value="F:magnesium ion binding"/>
    <property type="evidence" value="ECO:0007669"/>
    <property type="project" value="UniProtKB-UniRule"/>
</dbReference>
<dbReference type="GO" id="GO:0006310">
    <property type="term" value="P:DNA recombination"/>
    <property type="evidence" value="ECO:0007669"/>
    <property type="project" value="UniProtKB-UniRule"/>
</dbReference>
<dbReference type="GO" id="GO:0006281">
    <property type="term" value="P:DNA repair"/>
    <property type="evidence" value="ECO:0007669"/>
    <property type="project" value="UniProtKB-UniRule"/>
</dbReference>
<dbReference type="CDD" id="cd16962">
    <property type="entry name" value="RuvC"/>
    <property type="match status" value="1"/>
</dbReference>
<dbReference type="FunFam" id="3.30.420.10:FF:000002">
    <property type="entry name" value="Crossover junction endodeoxyribonuclease RuvC"/>
    <property type="match status" value="1"/>
</dbReference>
<dbReference type="Gene3D" id="3.30.420.10">
    <property type="entry name" value="Ribonuclease H-like superfamily/Ribonuclease H"/>
    <property type="match status" value="1"/>
</dbReference>
<dbReference type="HAMAP" id="MF_00034">
    <property type="entry name" value="RuvC"/>
    <property type="match status" value="1"/>
</dbReference>
<dbReference type="InterPro" id="IPR012337">
    <property type="entry name" value="RNaseH-like_sf"/>
</dbReference>
<dbReference type="InterPro" id="IPR036397">
    <property type="entry name" value="RNaseH_sf"/>
</dbReference>
<dbReference type="InterPro" id="IPR020563">
    <property type="entry name" value="X-over_junc_endoDNase_Mg_BS"/>
</dbReference>
<dbReference type="InterPro" id="IPR002176">
    <property type="entry name" value="X-over_junc_endoDNase_RuvC"/>
</dbReference>
<dbReference type="NCBIfam" id="NF000711">
    <property type="entry name" value="PRK00039.2-1"/>
    <property type="match status" value="1"/>
</dbReference>
<dbReference type="NCBIfam" id="TIGR00228">
    <property type="entry name" value="ruvC"/>
    <property type="match status" value="1"/>
</dbReference>
<dbReference type="PANTHER" id="PTHR30194">
    <property type="entry name" value="CROSSOVER JUNCTION ENDODEOXYRIBONUCLEASE RUVC"/>
    <property type="match status" value="1"/>
</dbReference>
<dbReference type="PANTHER" id="PTHR30194:SF3">
    <property type="entry name" value="CROSSOVER JUNCTION ENDODEOXYRIBONUCLEASE RUVC"/>
    <property type="match status" value="1"/>
</dbReference>
<dbReference type="Pfam" id="PF02075">
    <property type="entry name" value="RuvC"/>
    <property type="match status" value="1"/>
</dbReference>
<dbReference type="PRINTS" id="PR00696">
    <property type="entry name" value="RSOLVASERUVC"/>
</dbReference>
<dbReference type="SUPFAM" id="SSF53098">
    <property type="entry name" value="Ribonuclease H-like"/>
    <property type="match status" value="1"/>
</dbReference>
<dbReference type="PROSITE" id="PS01321">
    <property type="entry name" value="RUVC"/>
    <property type="match status" value="1"/>
</dbReference>
<reference key="1">
    <citation type="journal article" date="2001" name="Proc. Natl. Acad. Sci. U.S.A.">
        <title>Genome sequence of an industrial microorganism Streptomyces avermitilis: deducing the ability of producing secondary metabolites.</title>
        <authorList>
            <person name="Omura S."/>
            <person name="Ikeda H."/>
            <person name="Ishikawa J."/>
            <person name="Hanamoto A."/>
            <person name="Takahashi C."/>
            <person name="Shinose M."/>
            <person name="Takahashi Y."/>
            <person name="Horikawa H."/>
            <person name="Nakazawa H."/>
            <person name="Osonoe T."/>
            <person name="Kikuchi H."/>
            <person name="Shiba T."/>
            <person name="Sakaki Y."/>
            <person name="Hattori M."/>
        </authorList>
    </citation>
    <scope>NUCLEOTIDE SEQUENCE [LARGE SCALE GENOMIC DNA]</scope>
    <source>
        <strain>ATCC 31267 / DSM 46492 / JCM 5070 / NBRC 14893 / NCIMB 12804 / NRRL 8165 / MA-4680</strain>
    </source>
</reference>
<reference key="2">
    <citation type="journal article" date="2003" name="Nat. Biotechnol.">
        <title>Complete genome sequence and comparative analysis of the industrial microorganism Streptomyces avermitilis.</title>
        <authorList>
            <person name="Ikeda H."/>
            <person name="Ishikawa J."/>
            <person name="Hanamoto A."/>
            <person name="Shinose M."/>
            <person name="Kikuchi H."/>
            <person name="Shiba T."/>
            <person name="Sakaki Y."/>
            <person name="Hattori M."/>
            <person name="Omura S."/>
        </authorList>
    </citation>
    <scope>NUCLEOTIDE SEQUENCE [LARGE SCALE GENOMIC DNA]</scope>
    <source>
        <strain>ATCC 31267 / DSM 46492 / JCM 5070 / NBRC 14893 / NCIMB 12804 / NRRL 8165 / MA-4680</strain>
    </source>
</reference>
<sequence length="176" mass="18497">MRVLGVDPGLTRCGVGVVEGVAGRPLTMRGVGVVRTPADAELGLRLVAIEQGIEQWLDEYRPECVAVERVFSQHNVRTVMGTAQASAVAMLCAARRGIPVALHTPSEVKAAVTGSGRADKAQVGAMVTRLLRLDAPPKPADAADALALAICHIWRAPAQNRLQQAVALHASKGRTA</sequence>
<organism>
    <name type="scientific">Streptomyces avermitilis (strain ATCC 31267 / DSM 46492 / JCM 5070 / NBRC 14893 / NCIMB 12804 / NRRL 8165 / MA-4680)</name>
    <dbReference type="NCBI Taxonomy" id="227882"/>
    <lineage>
        <taxon>Bacteria</taxon>
        <taxon>Bacillati</taxon>
        <taxon>Actinomycetota</taxon>
        <taxon>Actinomycetes</taxon>
        <taxon>Kitasatosporales</taxon>
        <taxon>Streptomycetaceae</taxon>
        <taxon>Streptomyces</taxon>
    </lineage>
</organism>
<proteinExistence type="inferred from homology"/>
<accession>Q820F5</accession>
<comment type="function">
    <text evidence="1">The RuvA-RuvB-RuvC complex processes Holliday junction (HJ) DNA during genetic recombination and DNA repair. Endonuclease that resolves HJ intermediates. Cleaves cruciform DNA by making single-stranded nicks across the HJ at symmetrical positions within the homologous arms, yielding a 5'-phosphate and a 3'-hydroxyl group; requires a central core of homology in the junction. The consensus cleavage sequence is 5'-(A/T)TT(C/G)-3'. Cleavage occurs on the 3'-side of the TT dinucleotide at the point of strand exchange. HJ branch migration catalyzed by RuvA-RuvB allows RuvC to scan DNA until it finds its consensus sequence, where it cleaves and resolves the cruciform DNA.</text>
</comment>
<comment type="catalytic activity">
    <reaction evidence="1">
        <text>Endonucleolytic cleavage at a junction such as a reciprocal single-stranded crossover between two homologous DNA duplexes (Holliday junction).</text>
        <dbReference type="EC" id="3.1.21.10"/>
    </reaction>
</comment>
<comment type="cofactor">
    <cofactor evidence="1">
        <name>Mg(2+)</name>
        <dbReference type="ChEBI" id="CHEBI:18420"/>
    </cofactor>
    <text evidence="1">Binds 2 Mg(2+) ion per subunit.</text>
</comment>
<comment type="subunit">
    <text evidence="1">Homodimer which binds Holliday junction (HJ) DNA. The HJ becomes 2-fold symmetrical on binding to RuvC with unstacked arms; it has a different conformation from HJ DNA in complex with RuvA. In the full resolvosome a probable DNA-RuvA(4)-RuvB(12)-RuvC(2) complex forms which resolves the HJ.</text>
</comment>
<comment type="subcellular location">
    <subcellularLocation>
        <location evidence="1">Cytoplasm</location>
    </subcellularLocation>
</comment>
<comment type="similarity">
    <text evidence="1">Belongs to the RuvC family.</text>
</comment>
<evidence type="ECO:0000255" key="1">
    <source>
        <dbReference type="HAMAP-Rule" id="MF_00034"/>
    </source>
</evidence>
<name>RUVC_STRAW</name>
<feature type="chain" id="PRO_0000183134" description="Crossover junction endodeoxyribonuclease RuvC">
    <location>
        <begin position="1"/>
        <end position="176"/>
    </location>
</feature>
<feature type="active site" evidence="1">
    <location>
        <position position="7"/>
    </location>
</feature>
<feature type="active site" evidence="1">
    <location>
        <position position="68"/>
    </location>
</feature>
<feature type="active site" evidence="1">
    <location>
        <position position="141"/>
    </location>
</feature>
<feature type="binding site" evidence="1">
    <location>
        <position position="7"/>
    </location>
    <ligand>
        <name>Mg(2+)</name>
        <dbReference type="ChEBI" id="CHEBI:18420"/>
        <label>1</label>
    </ligand>
</feature>
<feature type="binding site" evidence="1">
    <location>
        <position position="68"/>
    </location>
    <ligand>
        <name>Mg(2+)</name>
        <dbReference type="ChEBI" id="CHEBI:18420"/>
        <label>2</label>
    </ligand>
</feature>
<feature type="binding site" evidence="1">
    <location>
        <position position="141"/>
    </location>
    <ligand>
        <name>Mg(2+)</name>
        <dbReference type="ChEBI" id="CHEBI:18420"/>
        <label>1</label>
    </ligand>
</feature>
<protein>
    <recommendedName>
        <fullName evidence="1">Crossover junction endodeoxyribonuclease RuvC</fullName>
        <ecNumber evidence="1">3.1.21.10</ecNumber>
    </recommendedName>
    <alternativeName>
        <fullName evidence="1">Holliday junction nuclease RuvC</fullName>
    </alternativeName>
    <alternativeName>
        <fullName evidence="1">Holliday junction resolvase RuvC</fullName>
    </alternativeName>
</protein>
<keyword id="KW-0963">Cytoplasm</keyword>
<keyword id="KW-0227">DNA damage</keyword>
<keyword id="KW-0233">DNA recombination</keyword>
<keyword id="KW-0234">DNA repair</keyword>
<keyword id="KW-0238">DNA-binding</keyword>
<keyword id="KW-0255">Endonuclease</keyword>
<keyword id="KW-0378">Hydrolase</keyword>
<keyword id="KW-0460">Magnesium</keyword>
<keyword id="KW-0479">Metal-binding</keyword>
<keyword id="KW-0540">Nuclease</keyword>
<keyword id="KW-1185">Reference proteome</keyword>
<gene>
    <name evidence="1" type="primary">ruvC</name>
    <name type="ordered locus">SAV_6833</name>
</gene>